<keyword id="KW-0378">Hydrolase</keyword>
<keyword id="KW-0479">Metal-binding</keyword>
<keyword id="KW-0482">Metalloprotease</keyword>
<keyword id="KW-0645">Protease</keyword>
<keyword id="KW-0862">Zinc</keyword>
<comment type="similarity">
    <text evidence="1">Belongs to the UPF0758 family. YicR subfamily.</text>
</comment>
<sequence>MDGMENLMPREKMLQYGIETLTDVELLALFLRVGTRRQDVLSYAQALLQRFGSLYALLSADKAQLIAVDGLGLAKYAQLKGIAELARRYFSSQLVEEAALVTPSMTREFLQSQLTEEEREIFMVIFLDNQNRVLKHSRLFSGTLSHVEVHPREIVREAIKVNAAAVILAHNHPSGSPEPSQADRLITERVIKCCRFMEIRVLDHLVIGRGAYVSFAERGWI</sequence>
<reference key="1">
    <citation type="submission" date="2006-09" db="EMBL/GenBank/DDBJ databases">
        <authorList>
            <consortium name="The Klebsiella pneumonia Genome Sequencing Project"/>
            <person name="McClelland M."/>
            <person name="Sanderson E.K."/>
            <person name="Spieth J."/>
            <person name="Clifton W.S."/>
            <person name="Latreille P."/>
            <person name="Sabo A."/>
            <person name="Pepin K."/>
            <person name="Bhonagiri V."/>
            <person name="Porwollik S."/>
            <person name="Ali J."/>
            <person name="Wilson R.K."/>
        </authorList>
    </citation>
    <scope>NUCLEOTIDE SEQUENCE [LARGE SCALE GENOMIC DNA]</scope>
    <source>
        <strain>ATCC 700721 / MGH 78578</strain>
    </source>
</reference>
<evidence type="ECO:0000255" key="1">
    <source>
        <dbReference type="HAMAP-Rule" id="MF_00018"/>
    </source>
</evidence>
<evidence type="ECO:0000255" key="2">
    <source>
        <dbReference type="PROSITE-ProRule" id="PRU01182"/>
    </source>
</evidence>
<dbReference type="EMBL" id="CP000647">
    <property type="protein sequence ID" value="ABR79363.1"/>
    <property type="molecule type" value="Genomic_DNA"/>
</dbReference>
<dbReference type="SMR" id="A6TFM9"/>
<dbReference type="STRING" id="272620.KPN_03978"/>
<dbReference type="PaxDb" id="272620-KPN_03978"/>
<dbReference type="EnsemblBacteria" id="ABR79363">
    <property type="protein sequence ID" value="ABR79363"/>
    <property type="gene ID" value="KPN_03978"/>
</dbReference>
<dbReference type="KEGG" id="kpn:KPN_03978"/>
<dbReference type="HOGENOM" id="CLU_073529_0_2_6"/>
<dbReference type="Proteomes" id="UP000000265">
    <property type="component" value="Chromosome"/>
</dbReference>
<dbReference type="GO" id="GO:0046872">
    <property type="term" value="F:metal ion binding"/>
    <property type="evidence" value="ECO:0007669"/>
    <property type="project" value="UniProtKB-KW"/>
</dbReference>
<dbReference type="GO" id="GO:0008237">
    <property type="term" value="F:metallopeptidase activity"/>
    <property type="evidence" value="ECO:0007669"/>
    <property type="project" value="UniProtKB-KW"/>
</dbReference>
<dbReference type="GO" id="GO:0006508">
    <property type="term" value="P:proteolysis"/>
    <property type="evidence" value="ECO:0007669"/>
    <property type="project" value="UniProtKB-KW"/>
</dbReference>
<dbReference type="CDD" id="cd08071">
    <property type="entry name" value="MPN_DUF2466"/>
    <property type="match status" value="1"/>
</dbReference>
<dbReference type="Gene3D" id="1.10.150.20">
    <property type="entry name" value="5' to 3' exonuclease, C-terminal subdomain"/>
    <property type="match status" value="1"/>
</dbReference>
<dbReference type="Gene3D" id="3.40.140.10">
    <property type="entry name" value="Cytidine Deaminase, domain 2"/>
    <property type="match status" value="1"/>
</dbReference>
<dbReference type="HAMAP" id="MF_00018">
    <property type="entry name" value="UPF0758_YicR"/>
    <property type="match status" value="1"/>
</dbReference>
<dbReference type="InterPro" id="IPR037518">
    <property type="entry name" value="MPN"/>
</dbReference>
<dbReference type="InterPro" id="IPR025657">
    <property type="entry name" value="RadC_JAB"/>
</dbReference>
<dbReference type="InterPro" id="IPR010994">
    <property type="entry name" value="RuvA_2-like"/>
</dbReference>
<dbReference type="InterPro" id="IPR001405">
    <property type="entry name" value="UPF0758"/>
</dbReference>
<dbReference type="InterPro" id="IPR020891">
    <property type="entry name" value="UPF0758_CS"/>
</dbReference>
<dbReference type="InterPro" id="IPR046778">
    <property type="entry name" value="UPF0758_N"/>
</dbReference>
<dbReference type="InterPro" id="IPR022820">
    <property type="entry name" value="UPF0758_YicR"/>
</dbReference>
<dbReference type="NCBIfam" id="NF000642">
    <property type="entry name" value="PRK00024.1"/>
    <property type="match status" value="1"/>
</dbReference>
<dbReference type="NCBIfam" id="TIGR00608">
    <property type="entry name" value="radc"/>
    <property type="match status" value="1"/>
</dbReference>
<dbReference type="PANTHER" id="PTHR30471">
    <property type="entry name" value="DNA REPAIR PROTEIN RADC"/>
    <property type="match status" value="1"/>
</dbReference>
<dbReference type="PANTHER" id="PTHR30471:SF3">
    <property type="entry name" value="UPF0758 PROTEIN YEES-RELATED"/>
    <property type="match status" value="1"/>
</dbReference>
<dbReference type="Pfam" id="PF04002">
    <property type="entry name" value="RadC"/>
    <property type="match status" value="1"/>
</dbReference>
<dbReference type="Pfam" id="PF20582">
    <property type="entry name" value="UPF0758_N"/>
    <property type="match status" value="1"/>
</dbReference>
<dbReference type="SUPFAM" id="SSF102712">
    <property type="entry name" value="JAB1/MPN domain"/>
    <property type="match status" value="1"/>
</dbReference>
<dbReference type="SUPFAM" id="SSF47781">
    <property type="entry name" value="RuvA domain 2-like"/>
    <property type="match status" value="1"/>
</dbReference>
<dbReference type="PROSITE" id="PS50249">
    <property type="entry name" value="MPN"/>
    <property type="match status" value="1"/>
</dbReference>
<dbReference type="PROSITE" id="PS01302">
    <property type="entry name" value="UPF0758"/>
    <property type="match status" value="1"/>
</dbReference>
<accession>A6TFM9</accession>
<protein>
    <recommendedName>
        <fullName evidence="1">UPF0758 protein KPN78578_39390</fullName>
    </recommendedName>
</protein>
<gene>
    <name type="ordered locus">KPN78578_39390</name>
    <name type="ORF">KPN_03978</name>
</gene>
<name>Y3939_KLEP7</name>
<proteinExistence type="inferred from homology"/>
<feature type="chain" id="PRO_1000001662" description="UPF0758 protein KPN78578_39390">
    <location>
        <begin position="1"/>
        <end position="221"/>
    </location>
</feature>
<feature type="domain" description="MPN" evidence="2">
    <location>
        <begin position="99"/>
        <end position="221"/>
    </location>
</feature>
<feature type="short sequence motif" description="JAMM motif" evidence="2">
    <location>
        <begin position="170"/>
        <end position="183"/>
    </location>
</feature>
<feature type="binding site" evidence="2">
    <location>
        <position position="170"/>
    </location>
    <ligand>
        <name>Zn(2+)</name>
        <dbReference type="ChEBI" id="CHEBI:29105"/>
        <note>catalytic</note>
    </ligand>
</feature>
<feature type="binding site" evidence="2">
    <location>
        <position position="172"/>
    </location>
    <ligand>
        <name>Zn(2+)</name>
        <dbReference type="ChEBI" id="CHEBI:29105"/>
        <note>catalytic</note>
    </ligand>
</feature>
<feature type="binding site" evidence="2">
    <location>
        <position position="183"/>
    </location>
    <ligand>
        <name>Zn(2+)</name>
        <dbReference type="ChEBI" id="CHEBI:29105"/>
        <note>catalytic</note>
    </ligand>
</feature>
<organism>
    <name type="scientific">Klebsiella pneumoniae subsp. pneumoniae (strain ATCC 700721 / MGH 78578)</name>
    <dbReference type="NCBI Taxonomy" id="272620"/>
    <lineage>
        <taxon>Bacteria</taxon>
        <taxon>Pseudomonadati</taxon>
        <taxon>Pseudomonadota</taxon>
        <taxon>Gammaproteobacteria</taxon>
        <taxon>Enterobacterales</taxon>
        <taxon>Enterobacteriaceae</taxon>
        <taxon>Klebsiella/Raoultella group</taxon>
        <taxon>Klebsiella</taxon>
        <taxon>Klebsiella pneumoniae complex</taxon>
    </lineage>
</organism>